<organism>
    <name type="scientific">Alstonia scholaris</name>
    <name type="common">Dogbane</name>
    <name type="synonym">Echites scholaris</name>
    <dbReference type="NCBI Taxonomy" id="52822"/>
    <lineage>
        <taxon>Eukaryota</taxon>
        <taxon>Viridiplantae</taxon>
        <taxon>Streptophyta</taxon>
        <taxon>Embryophyta</taxon>
        <taxon>Tracheophyta</taxon>
        <taxon>Spermatophyta</taxon>
        <taxon>Magnoliopsida</taxon>
        <taxon>eudicotyledons</taxon>
        <taxon>Gunneridae</taxon>
        <taxon>Pentapetalae</taxon>
        <taxon>asterids</taxon>
        <taxon>lamiids</taxon>
        <taxon>Gentianales</taxon>
        <taxon>Apocynaceae</taxon>
        <taxon>Rauvolfioideae</taxon>
        <taxon>Alstonieae</taxon>
        <taxon>Alstonia</taxon>
    </lineage>
</organism>
<evidence type="ECO:0000250" key="1">
    <source>
        <dbReference type="UniProtKB" id="A0A2K8FQU5"/>
    </source>
</evidence>
<evidence type="ECO:0000250" key="2">
    <source>
        <dbReference type="UniProtKB" id="Q9ZTK5"/>
    </source>
</evidence>
<evidence type="ECO:0000255" key="3"/>
<evidence type="ECO:0000255" key="4">
    <source>
        <dbReference type="PROSITE-ProRule" id="PRU00768"/>
    </source>
</evidence>
<evidence type="ECO:0000269" key="5">
    <source>
    </source>
</evidence>
<evidence type="ECO:0000303" key="6">
    <source>
    </source>
</evidence>
<evidence type="ECO:0000305" key="7"/>
<evidence type="ECO:0000312" key="8">
    <source>
        <dbReference type="EMBL" id="URS65388.1"/>
    </source>
</evidence>
<keyword id="KW-0012">Acyltransferase</keyword>
<keyword id="KW-0017">Alkaloid metabolism</keyword>
<keyword id="KW-0963">Cytoplasm</keyword>
<keyword id="KW-0539">Nucleus</keyword>
<keyword id="KW-0808">Transferase</keyword>
<proteinExistence type="evidence at protein level"/>
<comment type="function">
    <text evidence="5">Acyltransferase involved in the biosynthesis of akuammilan monoterpene indole alkaloids (MIAs) natural products, components with various biological properties such as antidiabetic, antibacterial, anti-inflammatory, anticancer, and antimalarial activities (PubMed:36349266). Catalyzes the conversion of rhazimol to akuammiline (PubMed:36349266).</text>
</comment>
<comment type="catalytic activity">
    <reaction evidence="5">
        <text>rhazimol + acetyl-CoA = akuammiline + CoA + H(+)</text>
        <dbReference type="Rhea" id="RHEA:79623"/>
        <dbReference type="ChEBI" id="CHEBI:15378"/>
        <dbReference type="ChEBI" id="CHEBI:57287"/>
        <dbReference type="ChEBI" id="CHEBI:57288"/>
        <dbReference type="ChEBI" id="CHEBI:141879"/>
        <dbReference type="ChEBI" id="CHEBI:230474"/>
        <dbReference type="EC" id="2.3.1.322"/>
    </reaction>
    <physiologicalReaction direction="left-to-right" evidence="5">
        <dbReference type="Rhea" id="RHEA:79624"/>
    </physiologicalReaction>
</comment>
<comment type="biophysicochemical properties">
    <phDependence>
        <text evidence="5">Optimum pH is 6-8.</text>
    </phDependence>
    <temperatureDependence>
        <text evidence="5">Optimum temperature is 22-47 degrees Celsius.</text>
    </temperatureDependence>
</comment>
<comment type="pathway">
    <text evidence="5">Alkaloid biosynthesis.</text>
</comment>
<comment type="subunit">
    <text evidence="2">Monomer.</text>
</comment>
<comment type="subcellular location">
    <subcellularLocation>
        <location evidence="1">Cytoplasm</location>
    </subcellularLocation>
    <subcellularLocation>
        <location evidence="1">Nucleus</location>
    </subcellularLocation>
</comment>
<comment type="similarity">
    <text evidence="7">Belongs to the plant acyltransferase family.</text>
</comment>
<dbReference type="EC" id="2.3.1.322" evidence="5"/>
<dbReference type="EMBL" id="OM323333">
    <property type="protein sequence ID" value="URS65388.1"/>
    <property type="molecule type" value="mRNA"/>
</dbReference>
<dbReference type="KEGG" id="ag:URS65388"/>
<dbReference type="GO" id="GO:0016747">
    <property type="term" value="F:acyltransferase activity, transferring groups other than amino-acyl groups"/>
    <property type="evidence" value="ECO:0007669"/>
    <property type="project" value="UniProtKB-ARBA"/>
</dbReference>
<dbReference type="GO" id="GO:0035835">
    <property type="term" value="P:indole alkaloid biosynthetic process"/>
    <property type="evidence" value="ECO:0000314"/>
    <property type="project" value="UniProtKB"/>
</dbReference>
<dbReference type="Gene3D" id="3.30.559.10">
    <property type="entry name" value="Chloramphenicol acetyltransferase-like domain"/>
    <property type="match status" value="2"/>
</dbReference>
<dbReference type="InterPro" id="IPR023213">
    <property type="entry name" value="CAT-like_dom_sf"/>
</dbReference>
<dbReference type="PANTHER" id="PTHR31623">
    <property type="entry name" value="F21J9.9"/>
    <property type="match status" value="1"/>
</dbReference>
<dbReference type="PANTHER" id="PTHR31623:SF21">
    <property type="entry name" value="VINORINE SYNTHASE-LIKE"/>
    <property type="match status" value="1"/>
</dbReference>
<dbReference type="Pfam" id="PF02458">
    <property type="entry name" value="Transferase"/>
    <property type="match status" value="1"/>
</dbReference>
<feature type="chain" id="PRO_0000462240" description="Akuammiline synthase 2">
    <location>
        <begin position="1"/>
        <end position="450"/>
    </location>
</feature>
<feature type="short sequence motif" description="Nuclear localization signal" evidence="4">
    <location>
        <begin position="218"/>
        <end position="225"/>
    </location>
</feature>
<feature type="active site" description="Proton acceptor" evidence="3">
    <location>
        <position position="154"/>
    </location>
</feature>
<feature type="active site" description="Proton acceptor" evidence="3">
    <location>
        <position position="376"/>
    </location>
</feature>
<accession>A0A9E7LUL3</accession>
<sequence length="450" mass="50520">MNITILSKETIKPLAPTPHHHKYYKVSLLDQFAPSSYMPFIFFYPNKFADRDAAGILTQLKESLSQILTIYYPLAGRVKDTVYVECNDEGVEFIEAQANGSLSDFLKQPDIAALNNFLPRNGNGLEKGCSISPVAIKATVFECSGIVLGVCIFHKVVDAAAAGEFLQSWAKIGRGSKETVELPNFTSASSLFPPRESLSSKFVRDFDNFFFQGSKSFMRRFVFDATAITTLRTKATSEKVPNPSRVEALMEFVVQHLSTAFKTAKSETPETLMITHPVNLRKRIEPPLPDSTFGNVIWLAFAFYDCDPSETKIKPGDVVERVREAFAALDKESISELETDDAFTSLSELLESVYTNEKIKIYRFTSTCNMGFYDVDFGWGKPVWVAHMGNMVDYRCKQQIVFMETGHMSKDIELWLAAEEDELSVLEKNAEFLAYATPNPTIWLDSDGTN</sequence>
<reference evidence="8" key="1">
    <citation type="journal article" date="2022" name="Chem. Sci.">
        <title>Deciphering and reprogramming the cyclization regioselectivity in bifurcation of indole alkaloid biosynthesis.</title>
        <authorList>
            <person name="Wang Z."/>
            <person name="Xiao Y."/>
            <person name="Wu S."/>
            <person name="Chen J."/>
            <person name="Li A."/>
            <person name="Tatsis E.C."/>
        </authorList>
    </citation>
    <scope>NUCLEOTIDE SEQUENCE [MRNA]</scope>
    <scope>FUNCTION</scope>
    <scope>CATALYTIC ACTIVITY</scope>
    <scope>PATHWAY</scope>
    <scope>BIOPHYSICOCHEMICAL PROPERTIES</scope>
</reference>
<name>AKS2_ALSSC</name>
<protein>
    <recommendedName>
        <fullName evidence="6">Akuammiline synthase 2</fullName>
        <shortName evidence="6">AsAKS2</shortName>
        <ecNumber evidence="5">2.3.1.322</ecNumber>
    </recommendedName>
</protein>
<gene>
    <name evidence="6" type="primary">AKS2</name>
    <name evidence="6" type="synonym">BAHD5</name>
</gene>